<comment type="function">
    <text evidence="3 6 11">Transcription factor that acts as a regulator of embryonic stem cell differentiation during the preimplantation stages of embryonic development.</text>
</comment>
<comment type="function">
    <molecule>Isoform 1</molecule>
    <text evidence="3">Transcription factor that acts as a positive regulator of embryonic stem cell differentiation.</text>
</comment>
<comment type="function">
    <molecule>Isoform 2</molecule>
    <text evidence="2 3 9 10">Transcription factor that promotes embryonic stem cell pluripotency.</text>
</comment>
<comment type="function">
    <molecule>Isoform 3</molecule>
    <text evidence="4 5 7">Transcription factor that promotes embryonic stem cell pluripotency (PubMed:22367590, PubMed:22785471). Also involved in extraembryonic tissues development by promoting the expression of placental prolactin family genes (PubMed:21084569).</text>
</comment>
<comment type="subcellular location">
    <subcellularLocation>
        <location evidence="1 8">Nucleus</location>
    </subcellularLocation>
</comment>
<comment type="alternative products">
    <event type="alternative splicing"/>
    <isoform>
        <id>Q3UL53-1</id>
        <name>1</name>
        <name evidence="12">EGAM1</name>
        <name evidence="12">Crxos1</name>
        <sequence type="displayed"/>
    </isoform>
    <isoform>
        <id>Q3UL53-2</id>
        <name>2</name>
        <name evidence="12">EGAM1N</name>
        <name evidence="12">Crxos1 sv2</name>
        <name evidence="12">sv2</name>
        <sequence type="described" ref="VSP_062072 VSP_062073"/>
    </isoform>
    <isoform>
        <id>Q3UL53-3</id>
        <name>3</name>
        <name evidence="12">EGAM1C</name>
        <name evidence="12">Crxos1 tv3</name>
        <name evidence="12">tv3</name>
        <sequence type="described" ref="VSP_062071"/>
    </isoform>
</comment>
<comment type="tissue specificity">
    <text evidence="2 3">Specifically expressed during the preimplantation stages of embryonic development, between the four-cell to eight-cell stage and the morula stage (PubMed:19800316, PubMed:20018908). Expressed in adult testis (PubMed:19800316).</text>
</comment>
<comment type="tissue specificity">
    <molecule>Isoform 3</molecule>
    <text evidence="4">Detected in early embryos; expression decreases gradually with embryonic development (PubMed:21084569). Also expressed in extraembryonic tissues after E14.5, expression level increases drastically until E18.5, immediately before partum (PubMed:21084569).</text>
</comment>
<comment type="similarity">
    <text evidence="13">Belongs to the paired homeobox family.</text>
</comment>
<reference key="1">
    <citation type="journal article" date="2010" name="Biol. Reprod.">
        <title>Cloning of complementary DNAs encoding structurally related homeoproteins from preimplantation mouse embryos: their involvement in the differentiation of embryonic stem cells.</title>
        <authorList>
            <person name="Saito K."/>
            <person name="Abe H."/>
            <person name="Nakazawa M."/>
            <person name="Irokawa E."/>
            <person name="Watanabe M."/>
            <person name="Hosoi Y."/>
            <person name="Soma M."/>
            <person name="Kasuga K."/>
            <person name="Kojima I."/>
            <person name="Kobayashi M."/>
        </authorList>
    </citation>
    <scope>NUCLEOTIDE SEQUENCE [MRNA] (ISOFORMS 1; 2 AND 3)</scope>
    <scope>FUNCTION</scope>
    <scope>TISSUE SPECIFICITY</scope>
</reference>
<reference key="2">
    <citation type="journal article" date="2005" name="Science">
        <title>The transcriptional landscape of the mammalian genome.</title>
        <authorList>
            <person name="Carninci P."/>
            <person name="Kasukawa T."/>
            <person name="Katayama S."/>
            <person name="Gough J."/>
            <person name="Frith M.C."/>
            <person name="Maeda N."/>
            <person name="Oyama R."/>
            <person name="Ravasi T."/>
            <person name="Lenhard B."/>
            <person name="Wells C."/>
            <person name="Kodzius R."/>
            <person name="Shimokawa K."/>
            <person name="Bajic V.B."/>
            <person name="Brenner S.E."/>
            <person name="Batalov S."/>
            <person name="Forrest A.R."/>
            <person name="Zavolan M."/>
            <person name="Davis M.J."/>
            <person name="Wilming L.G."/>
            <person name="Aidinis V."/>
            <person name="Allen J.E."/>
            <person name="Ambesi-Impiombato A."/>
            <person name="Apweiler R."/>
            <person name="Aturaliya R.N."/>
            <person name="Bailey T.L."/>
            <person name="Bansal M."/>
            <person name="Baxter L."/>
            <person name="Beisel K.W."/>
            <person name="Bersano T."/>
            <person name="Bono H."/>
            <person name="Chalk A.M."/>
            <person name="Chiu K.P."/>
            <person name="Choudhary V."/>
            <person name="Christoffels A."/>
            <person name="Clutterbuck D.R."/>
            <person name="Crowe M.L."/>
            <person name="Dalla E."/>
            <person name="Dalrymple B.P."/>
            <person name="de Bono B."/>
            <person name="Della Gatta G."/>
            <person name="di Bernardo D."/>
            <person name="Down T."/>
            <person name="Engstrom P."/>
            <person name="Fagiolini M."/>
            <person name="Faulkner G."/>
            <person name="Fletcher C.F."/>
            <person name="Fukushima T."/>
            <person name="Furuno M."/>
            <person name="Futaki S."/>
            <person name="Gariboldi M."/>
            <person name="Georgii-Hemming P."/>
            <person name="Gingeras T.R."/>
            <person name="Gojobori T."/>
            <person name="Green R.E."/>
            <person name="Gustincich S."/>
            <person name="Harbers M."/>
            <person name="Hayashi Y."/>
            <person name="Hensch T.K."/>
            <person name="Hirokawa N."/>
            <person name="Hill D."/>
            <person name="Huminiecki L."/>
            <person name="Iacono M."/>
            <person name="Ikeo K."/>
            <person name="Iwama A."/>
            <person name="Ishikawa T."/>
            <person name="Jakt M."/>
            <person name="Kanapin A."/>
            <person name="Katoh M."/>
            <person name="Kawasawa Y."/>
            <person name="Kelso J."/>
            <person name="Kitamura H."/>
            <person name="Kitano H."/>
            <person name="Kollias G."/>
            <person name="Krishnan S.P."/>
            <person name="Kruger A."/>
            <person name="Kummerfeld S.K."/>
            <person name="Kurochkin I.V."/>
            <person name="Lareau L.F."/>
            <person name="Lazarevic D."/>
            <person name="Lipovich L."/>
            <person name="Liu J."/>
            <person name="Liuni S."/>
            <person name="McWilliam S."/>
            <person name="Madan Babu M."/>
            <person name="Madera M."/>
            <person name="Marchionni L."/>
            <person name="Matsuda H."/>
            <person name="Matsuzawa S."/>
            <person name="Miki H."/>
            <person name="Mignone F."/>
            <person name="Miyake S."/>
            <person name="Morris K."/>
            <person name="Mottagui-Tabar S."/>
            <person name="Mulder N."/>
            <person name="Nakano N."/>
            <person name="Nakauchi H."/>
            <person name="Ng P."/>
            <person name="Nilsson R."/>
            <person name="Nishiguchi S."/>
            <person name="Nishikawa S."/>
            <person name="Nori F."/>
            <person name="Ohara O."/>
            <person name="Okazaki Y."/>
            <person name="Orlando V."/>
            <person name="Pang K.C."/>
            <person name="Pavan W.J."/>
            <person name="Pavesi G."/>
            <person name="Pesole G."/>
            <person name="Petrovsky N."/>
            <person name="Piazza S."/>
            <person name="Reed J."/>
            <person name="Reid J.F."/>
            <person name="Ring B.Z."/>
            <person name="Ringwald M."/>
            <person name="Rost B."/>
            <person name="Ruan Y."/>
            <person name="Salzberg S.L."/>
            <person name="Sandelin A."/>
            <person name="Schneider C."/>
            <person name="Schoenbach C."/>
            <person name="Sekiguchi K."/>
            <person name="Semple C.A."/>
            <person name="Seno S."/>
            <person name="Sessa L."/>
            <person name="Sheng Y."/>
            <person name="Shibata Y."/>
            <person name="Shimada H."/>
            <person name="Shimada K."/>
            <person name="Silva D."/>
            <person name="Sinclair B."/>
            <person name="Sperling S."/>
            <person name="Stupka E."/>
            <person name="Sugiura K."/>
            <person name="Sultana R."/>
            <person name="Takenaka Y."/>
            <person name="Taki K."/>
            <person name="Tammoja K."/>
            <person name="Tan S.L."/>
            <person name="Tang S."/>
            <person name="Taylor M.S."/>
            <person name="Tegner J."/>
            <person name="Teichmann S.A."/>
            <person name="Ueda H.R."/>
            <person name="van Nimwegen E."/>
            <person name="Verardo R."/>
            <person name="Wei C.L."/>
            <person name="Yagi K."/>
            <person name="Yamanishi H."/>
            <person name="Zabarovsky E."/>
            <person name="Zhu S."/>
            <person name="Zimmer A."/>
            <person name="Hide W."/>
            <person name="Bult C."/>
            <person name="Grimmond S.M."/>
            <person name="Teasdale R.D."/>
            <person name="Liu E.T."/>
            <person name="Brusic V."/>
            <person name="Quackenbush J."/>
            <person name="Wahlestedt C."/>
            <person name="Mattick J.S."/>
            <person name="Hume D.A."/>
            <person name="Kai C."/>
            <person name="Sasaki D."/>
            <person name="Tomaru Y."/>
            <person name="Fukuda S."/>
            <person name="Kanamori-Katayama M."/>
            <person name="Suzuki M."/>
            <person name="Aoki J."/>
            <person name="Arakawa T."/>
            <person name="Iida J."/>
            <person name="Imamura K."/>
            <person name="Itoh M."/>
            <person name="Kato T."/>
            <person name="Kawaji H."/>
            <person name="Kawagashira N."/>
            <person name="Kawashima T."/>
            <person name="Kojima M."/>
            <person name="Kondo S."/>
            <person name="Konno H."/>
            <person name="Nakano K."/>
            <person name="Ninomiya N."/>
            <person name="Nishio T."/>
            <person name="Okada M."/>
            <person name="Plessy C."/>
            <person name="Shibata K."/>
            <person name="Shiraki T."/>
            <person name="Suzuki S."/>
            <person name="Tagami M."/>
            <person name="Waki K."/>
            <person name="Watahiki A."/>
            <person name="Okamura-Oho Y."/>
            <person name="Suzuki H."/>
            <person name="Kawai J."/>
            <person name="Hayashizaki Y."/>
        </authorList>
    </citation>
    <scope>NUCLEOTIDE SEQUENCE [LARGE SCALE MRNA] (ISOFORM 1)</scope>
    <source>
        <strain>C57BL/6J</strain>
    </source>
</reference>
<reference key="3">
    <citation type="journal article" date="2009" name="Biochem. Biophys. Res. Commun.">
        <title>CrxOS maintains the self-renewal capacity of murine embryonic stem cells.</title>
        <authorList>
            <person name="Saito R."/>
            <person name="Yamasaki T."/>
            <person name="Nagai Y."/>
            <person name="Wu J."/>
            <person name="Kajiho H."/>
            <person name="Yokoi T."/>
            <person name="Noda E."/>
            <person name="Nishina S."/>
            <person name="Niwa H."/>
            <person name="Azuma N."/>
            <person name="Katada T."/>
            <person name="Nishina H."/>
        </authorList>
    </citation>
    <scope>FUNCTION (ISOFORM 2)</scope>
    <scope>TISSUE SPECIFICITY</scope>
</reference>
<reference key="4">
    <citation type="journal article" date="2011" name="Reproduction">
        <title>Relationships between homeoprotein EGAM1C and the expression of the placental prolactin gene family in mouse placentae and trophoblast stem cells.</title>
        <authorList>
            <person name="Saito K."/>
            <person name="Ogawa A."/>
            <person name="Toyofuku K."/>
            <person name="Hosoi Y."/>
            <person name="Soma M."/>
            <person name="Iha M."/>
            <person name="Kasuga K."/>
            <person name="Kojima I."/>
            <person name="Kobayashi M."/>
        </authorList>
    </citation>
    <scope>FUNCTION (ISOFORM 3)</scope>
</reference>
<reference key="5">
    <citation type="journal article" date="2012" name="Biosci. Biotechnol. Biochem.">
        <title>Severe inhibition of in vitro cardiomyogenesis in mouse embryonic stem cells ectopically expressing EGAM1C homeoprotein.</title>
        <authorList>
            <person name="Iha M."/>
            <person name="Soma M."/>
            <person name="Sato S."/>
            <person name="Mori Y."/>
            <person name="Sugawara S."/>
            <person name="Kasuga K."/>
            <person name="Kojima I."/>
            <person name="Yamada S."/>
            <person name="Sakaki S."/>
            <person name="Kobayashi M."/>
        </authorList>
    </citation>
    <scope>FUNCTION (ISOFORM 3)</scope>
</reference>
<reference key="6">
    <citation type="journal article" date="2012" name="J. Biosci. Bioeng.">
        <title>Preferential emergence of cell types expressing markers for primitive endoderm lineages in mouse embryonic stem cells expressing exogenous EGAM1 homeoprotein.</title>
        <authorList>
            <person name="Soma M."/>
            <person name="Iha M."/>
            <person name="Kihara Y."/>
            <person name="Sato S."/>
            <person name="Sato Y."/>
            <person name="Sato S."/>
            <person name="Mori Y."/>
            <person name="Sugawara S."/>
            <person name="Kasuga K."/>
            <person name="Kojima I."/>
            <person name="Kobayashi M."/>
        </authorList>
    </citation>
    <scope>FUNCTION</scope>
</reference>
<reference key="7">
    <citation type="journal article" date="2012" name="Reproduction">
        <title>Effect of ectopic expression of homeoprotein EGAM1C on the cell morphology, growth, and differentiation in a mouse embryonic stem cell line, MG1.19 cells.</title>
        <authorList>
            <person name="Iha M."/>
            <person name="Watanabe M."/>
            <person name="Kihara Y."/>
            <person name="Sugawara S."/>
            <person name="Saito K."/>
            <person name="Soma M."/>
            <person name="Sato S."/>
            <person name="Mori Y."/>
            <person name="Kasuga K."/>
            <person name="Kojima I."/>
            <person name="Sasamura R."/>
            <person name="Murata J."/>
            <person name="Kobayashi M."/>
        </authorList>
    </citation>
    <scope>FUNCTION (ISOFORM 3)</scope>
</reference>
<reference key="8">
    <citation type="journal article" date="2013" name="J. Biosci. Bioeng.">
        <title>Intact structure of EGAM1 homeoproteins and basic amino acid residues in the common homeodomain of EGAM1 and EGAM1C contribute to their nuclear localization in mouse embryonic stem cells.</title>
        <authorList>
            <person name="Sato S."/>
            <person name="Morita S."/>
            <person name="Iha M."/>
            <person name="Mori Y."/>
            <person name="Sugawara S."/>
            <person name="Kasuga K."/>
            <person name="Kojima I."/>
            <person name="Ozaki N."/>
            <person name="Muraguchi H."/>
            <person name="Okano K."/>
            <person name="Iwashita J."/>
            <person name="Murata J."/>
            <person name="Hosaka M."/>
            <person name="Kobayashi M."/>
        </authorList>
    </citation>
    <scope>SUBCELLULAR LOCATION</scope>
    <scope>MUTAGENESIS OF 163-ARG--ARG-177</scope>
</reference>
<reference key="9">
    <citation type="journal article" date="2015" name="J. Biosci. Bioeng.">
        <title>Partial inhibition of differentiation associated with elevated protein levels of pluripotency factors in mouse embryonic stem cells expressing exogenous EGAM1N homeoprotein.</title>
        <authorList>
            <person name="Sato S."/>
            <person name="Nakazawa M."/>
            <person name="Kihara Y."/>
            <person name="Kubo Y."/>
            <person name="Sato Y."/>
            <person name="Kikuchi T."/>
            <person name="Nonaka A."/>
            <person name="Sasaki A."/>
            <person name="Iwashita J."/>
            <person name="Murata J."/>
            <person name="Hosaka M."/>
            <person name="Kobayashi M."/>
        </authorList>
    </citation>
    <scope>FUNCTION (ISOFORM 2)</scope>
</reference>
<reference key="10">
    <citation type="journal article" date="2016" name="Cytotechnology">
        <title>Exogenous expression of homeoprotein EGAM1N prevents in vitro cardiomyogenesis by impairing expression of T and Nkx2.5, but not Mef2c, in mouse embryonic stem cells.</title>
        <authorList>
            <person name="Nonaka A."/>
            <person name="Yoshida M."/>
            <person name="Iha M."/>
            <person name="Kubo Y."/>
            <person name="Kihara Y."/>
            <person name="Kikuchi T."/>
            <person name="Kumagai Y."/>
            <person name="Sasaki A."/>
            <person name="Kobayashi M."/>
        </authorList>
    </citation>
    <scope>FUNCTION (ISOFORM 2)</scope>
</reference>
<reference key="11">
    <citation type="journal article" date="2018" name="Evodevo">
        <title>Mouse Obox and Crxos modulate preimplantation transcriptional profiles revealing similarity between paralogous mouse and human homeobox genes.</title>
        <authorList>
            <person name="Royall A.H."/>
            <person name="Maeso I."/>
            <person name="Dunwell T.L."/>
            <person name="Holland P.W.H."/>
        </authorList>
    </citation>
    <scope>FUNCTION</scope>
</reference>
<accession>Q3UL53</accession>
<accession>B6ZND8</accession>
<accession>B6ZND9</accession>
<evidence type="ECO:0000255" key="1">
    <source>
        <dbReference type="PROSITE-ProRule" id="PRU00108"/>
    </source>
</evidence>
<evidence type="ECO:0000269" key="2">
    <source>
    </source>
</evidence>
<evidence type="ECO:0000269" key="3">
    <source>
    </source>
</evidence>
<evidence type="ECO:0000269" key="4">
    <source>
    </source>
</evidence>
<evidence type="ECO:0000269" key="5">
    <source>
    </source>
</evidence>
<evidence type="ECO:0000269" key="6">
    <source>
    </source>
</evidence>
<evidence type="ECO:0000269" key="7">
    <source>
    </source>
</evidence>
<evidence type="ECO:0000269" key="8">
    <source>
    </source>
</evidence>
<evidence type="ECO:0000269" key="9">
    <source>
    </source>
</evidence>
<evidence type="ECO:0000269" key="10">
    <source>
    </source>
</evidence>
<evidence type="ECO:0000269" key="11">
    <source>
    </source>
</evidence>
<evidence type="ECO:0000303" key="12">
    <source>
    </source>
</evidence>
<evidence type="ECO:0000305" key="13"/>
<evidence type="ECO:0000312" key="14">
    <source>
        <dbReference type="MGI" id="MGI:2451355"/>
    </source>
</evidence>
<sequence length="246" mass="29090">MEASPRSLTSCTLGPLDQKFSWEQLSELEAYFKVEPYPDLQDRKIMATRLKLKEEQVEAWFIQRSLEEEMRPPLARLQQSALDGTSSPSHKALCCRPPSWKYRLIPINPPESSTSCLKDSKTVLISKTELTDEQFQKLRKHFETDRCPNEETLQAFAEELKLRKDLIRSWFITQRHRMRGYRRLFMRYYRDWKTSREYSTTRSFDRQKNSKECSQNDPGLPEALEALKRLKLSSGYQSRDGMSQDF</sequence>
<gene>
    <name evidence="14" type="primary">Crxos</name>
</gene>
<organism>
    <name type="scientific">Mus musculus</name>
    <name type="common">Mouse</name>
    <dbReference type="NCBI Taxonomy" id="10090"/>
    <lineage>
        <taxon>Eukaryota</taxon>
        <taxon>Metazoa</taxon>
        <taxon>Chordata</taxon>
        <taxon>Craniata</taxon>
        <taxon>Vertebrata</taxon>
        <taxon>Euteleostomi</taxon>
        <taxon>Mammalia</taxon>
        <taxon>Eutheria</taxon>
        <taxon>Euarchontoglires</taxon>
        <taxon>Glires</taxon>
        <taxon>Rodentia</taxon>
        <taxon>Myomorpha</taxon>
        <taxon>Muroidea</taxon>
        <taxon>Muridae</taxon>
        <taxon>Murinae</taxon>
        <taxon>Mus</taxon>
        <taxon>Mus</taxon>
    </lineage>
</organism>
<protein>
    <recommendedName>
        <fullName evidence="13">Homeobox protein Crxos</fullName>
    </recommendedName>
    <alternativeName>
        <fullName evidence="13">Cone-rod homeobox, opposite strand protein</fullName>
    </alternativeName>
    <alternativeName>
        <fullName evidence="12">Expressing gene at morula stage protein 1</fullName>
        <shortName evidence="12">EGAM1</shortName>
    </alternativeName>
</protein>
<feature type="chain" id="PRO_0000459218" description="Homeobox protein Crxos">
    <location>
        <begin position="1"/>
        <end position="246"/>
    </location>
</feature>
<feature type="DNA-binding region" description="Homeobox 1" evidence="1">
    <location>
        <begin position="22"/>
        <end position="72"/>
    </location>
</feature>
<feature type="DNA-binding region" description="Homeobox 2" evidence="1">
    <location>
        <begin position="129"/>
        <end position="182"/>
    </location>
</feature>
<feature type="short sequence motif" description="Nuclear localization signal" evidence="8">
    <location>
        <begin position="163"/>
        <end position="177"/>
    </location>
</feature>
<feature type="splice variant" id="VSP_062071" description="In isoform 3.">
    <original>MEASPRSLTSCTLGPLDQKFSWEQLSELEAYFKVEPYPDLQDRKIMATRLKLKEEQVEAWFIQRSLEEEMRPPLARLQQSALDGTSSPSHKALCCRPPSWKYRLIPINPPESSTSC</original>
    <variation>MEEIDGMIVQMR</variation>
    <location>
        <begin position="1"/>
        <end position="116"/>
    </location>
</feature>
<feature type="splice variant" id="VSP_062072" description="In isoform 2.">
    <original>LKDS</original>
    <variation>KHSC</variation>
    <location>
        <begin position="117"/>
        <end position="120"/>
    </location>
</feature>
<feature type="splice variant" id="VSP_062073" description="In isoform 2.">
    <location>
        <begin position="121"/>
        <end position="246"/>
    </location>
</feature>
<feature type="mutagenesis site" description="Strongly reduced nuclear localization." evidence="8">
    <original>RKDLIRSWFITQRHR</original>
    <variation>AADLIASWFITQAHA</variation>
    <location>
        <begin position="163"/>
        <end position="177"/>
    </location>
</feature>
<proteinExistence type="evidence at protein level"/>
<keyword id="KW-0025">Alternative splicing</keyword>
<keyword id="KW-0217">Developmental protein</keyword>
<keyword id="KW-0238">DNA-binding</keyword>
<keyword id="KW-0371">Homeobox</keyword>
<keyword id="KW-0539">Nucleus</keyword>
<keyword id="KW-1185">Reference proteome</keyword>
<keyword id="KW-0677">Repeat</keyword>
<keyword id="KW-0804">Transcription</keyword>
<keyword id="KW-0805">Transcription regulation</keyword>
<name>CRXOS_MOUSE</name>
<dbReference type="EMBL" id="AB472692">
    <property type="protein sequence ID" value="BAH02925.1"/>
    <property type="molecule type" value="mRNA"/>
</dbReference>
<dbReference type="EMBL" id="AB472693">
    <property type="protein sequence ID" value="BAH02926.1"/>
    <property type="molecule type" value="mRNA"/>
</dbReference>
<dbReference type="EMBL" id="AB472694">
    <property type="protein sequence ID" value="BAH02927.1"/>
    <property type="molecule type" value="mRNA"/>
</dbReference>
<dbReference type="EMBL" id="AK145701">
    <property type="protein sequence ID" value="BAE26597.1"/>
    <property type="molecule type" value="mRNA"/>
</dbReference>
<dbReference type="CCDS" id="CCDS20841.1">
    <molecule id="Q3UL53-1"/>
</dbReference>
<dbReference type="CCDS" id="CCDS57497.1">
    <molecule id="Q3UL53-2"/>
</dbReference>
<dbReference type="CCDS" id="CCDS57498.1">
    <molecule id="Q3UL53-3"/>
</dbReference>
<dbReference type="RefSeq" id="NP_001028810.1">
    <molecule id="Q3UL53-1"/>
    <property type="nucleotide sequence ID" value="NM_001033638.3"/>
</dbReference>
<dbReference type="RefSeq" id="NP_001138662.1">
    <molecule id="Q3UL53-3"/>
    <property type="nucleotide sequence ID" value="NM_001145190.3"/>
</dbReference>
<dbReference type="RefSeq" id="NP_001192203.1">
    <molecule id="Q3UL53-2"/>
    <property type="nucleotide sequence ID" value="NM_001205274.2"/>
</dbReference>
<dbReference type="SMR" id="Q3UL53"/>
<dbReference type="FunCoup" id="Q3UL53">
    <property type="interactions" value="16"/>
</dbReference>
<dbReference type="STRING" id="10090.ENSMUSP00000096399"/>
<dbReference type="PaxDb" id="10090-ENSMUSP00000096399"/>
<dbReference type="DNASU" id="546024"/>
<dbReference type="GeneID" id="546024"/>
<dbReference type="KEGG" id="mmu:546024"/>
<dbReference type="UCSC" id="uc009fgo.3">
    <molecule id="Q3UL53-1"/>
    <property type="organism name" value="mouse"/>
</dbReference>
<dbReference type="AGR" id="MGI:2451355"/>
<dbReference type="CTD" id="546024"/>
<dbReference type="MGI" id="MGI:2451355">
    <property type="gene designation" value="Crxos"/>
</dbReference>
<dbReference type="VEuPathDB" id="HostDB:ENSMUSG00000074365"/>
<dbReference type="eggNOG" id="ENOG502RVNQ">
    <property type="taxonomic scope" value="Eukaryota"/>
</dbReference>
<dbReference type="HOGENOM" id="CLU_1128758_0_0_1"/>
<dbReference type="OrthoDB" id="6159439at2759"/>
<dbReference type="BioGRID-ORCS" id="546024">
    <property type="hits" value="7 hits in 77 CRISPR screens"/>
</dbReference>
<dbReference type="ChiTaRS" id="Crxos">
    <property type="organism name" value="mouse"/>
</dbReference>
<dbReference type="PRO" id="PR:Q3UL53"/>
<dbReference type="Proteomes" id="UP000000589">
    <property type="component" value="Unplaced"/>
</dbReference>
<dbReference type="RNAct" id="Q3UL53">
    <property type="molecule type" value="protein"/>
</dbReference>
<dbReference type="Bgee" id="ENSMUSG00000074365">
    <property type="expression patterns" value="Expressed in blastoderm cell in morula and 41 other cell types or tissues"/>
</dbReference>
<dbReference type="ExpressionAtlas" id="Q3UL53">
    <property type="expression patterns" value="baseline and differential"/>
</dbReference>
<dbReference type="GO" id="GO:0005634">
    <property type="term" value="C:nucleus"/>
    <property type="evidence" value="ECO:0000314"/>
    <property type="project" value="UniProtKB"/>
</dbReference>
<dbReference type="GO" id="GO:0003677">
    <property type="term" value="F:DNA binding"/>
    <property type="evidence" value="ECO:0007669"/>
    <property type="project" value="UniProtKB-KW"/>
</dbReference>
<dbReference type="GO" id="GO:0000981">
    <property type="term" value="F:DNA-binding transcription factor activity, RNA polymerase II-specific"/>
    <property type="evidence" value="ECO:0000314"/>
    <property type="project" value="UniProtKB"/>
</dbReference>
<dbReference type="GO" id="GO:0001835">
    <property type="term" value="P:blastocyst hatching"/>
    <property type="evidence" value="ECO:0000315"/>
    <property type="project" value="MGI"/>
</dbReference>
<dbReference type="GO" id="GO:0001892">
    <property type="term" value="P:embryonic placenta development"/>
    <property type="evidence" value="ECO:0000314"/>
    <property type="project" value="UniProtKB"/>
</dbReference>
<dbReference type="GO" id="GO:2000738">
    <property type="term" value="P:positive regulation of stem cell differentiation"/>
    <property type="evidence" value="ECO:0000314"/>
    <property type="project" value="UniProtKB"/>
</dbReference>
<dbReference type="GO" id="GO:0006357">
    <property type="term" value="P:regulation of transcription by RNA polymerase II"/>
    <property type="evidence" value="ECO:0000314"/>
    <property type="project" value="UniProtKB"/>
</dbReference>
<dbReference type="GO" id="GO:0019827">
    <property type="term" value="P:stem cell population maintenance"/>
    <property type="evidence" value="ECO:0000314"/>
    <property type="project" value="UniProtKB"/>
</dbReference>
<dbReference type="CDD" id="cd00086">
    <property type="entry name" value="homeodomain"/>
    <property type="match status" value="2"/>
</dbReference>
<dbReference type="FunFam" id="1.10.10.60:FF:000911">
    <property type="match status" value="1"/>
</dbReference>
<dbReference type="FunFam" id="1.10.10.60:FF:000680">
    <property type="entry name" value="Cone-rod homeobox, opposite strand"/>
    <property type="match status" value="1"/>
</dbReference>
<dbReference type="Gene3D" id="1.10.10.60">
    <property type="entry name" value="Homeodomain-like"/>
    <property type="match status" value="2"/>
</dbReference>
<dbReference type="InterPro" id="IPR050720">
    <property type="entry name" value="Engrailed_Homeobox_TFs"/>
</dbReference>
<dbReference type="InterPro" id="IPR001356">
    <property type="entry name" value="HD"/>
</dbReference>
<dbReference type="InterPro" id="IPR009057">
    <property type="entry name" value="Homeodomain-like_sf"/>
</dbReference>
<dbReference type="PANTHER" id="PTHR24341:SF1">
    <property type="entry name" value="CYTOPLASMIC POLYADENYLATED HOMEOBOX-LIKE PROTEIN"/>
    <property type="match status" value="1"/>
</dbReference>
<dbReference type="PANTHER" id="PTHR24341">
    <property type="entry name" value="HOMEOBOX PROTEIN ENGRAILED"/>
    <property type="match status" value="1"/>
</dbReference>
<dbReference type="Pfam" id="PF00046">
    <property type="entry name" value="Homeodomain"/>
    <property type="match status" value="2"/>
</dbReference>
<dbReference type="SMART" id="SM00389">
    <property type="entry name" value="HOX"/>
    <property type="match status" value="2"/>
</dbReference>
<dbReference type="SUPFAM" id="SSF46689">
    <property type="entry name" value="Homeodomain-like"/>
    <property type="match status" value="2"/>
</dbReference>
<dbReference type="PROSITE" id="PS50071">
    <property type="entry name" value="HOMEOBOX_2"/>
    <property type="match status" value="2"/>
</dbReference>